<accession>Q2VNC7</accession>
<organismHost>
    <name type="scientific">Aves</name>
    <dbReference type="NCBI Taxonomy" id="8782"/>
</organismHost>
<organismHost>
    <name type="scientific">Cetacea</name>
    <name type="common">whales</name>
    <dbReference type="NCBI Taxonomy" id="9721"/>
</organismHost>
<organismHost>
    <name type="scientific">Homo sapiens</name>
    <name type="common">Human</name>
    <dbReference type="NCBI Taxonomy" id="9606"/>
</organismHost>
<organismHost>
    <name type="scientific">Phocidae</name>
    <name type="common">true seals</name>
    <dbReference type="NCBI Taxonomy" id="9709"/>
</organismHost>
<organismHost>
    <name type="scientific">Sus scrofa</name>
    <name type="common">Pig</name>
    <dbReference type="NCBI Taxonomy" id="9823"/>
</organismHost>
<organism>
    <name type="scientific">Influenza A virus (strain A/Memphis/18/1978 H3N2)</name>
    <dbReference type="NCBI Taxonomy" id="383579"/>
    <lineage>
        <taxon>Viruses</taxon>
        <taxon>Riboviria</taxon>
        <taxon>Orthornavirae</taxon>
        <taxon>Negarnaviricota</taxon>
        <taxon>Polyploviricotina</taxon>
        <taxon>Insthoviricetes</taxon>
        <taxon>Articulavirales</taxon>
        <taxon>Orthomyxoviridae</taxon>
        <taxon>Alphainfluenzavirus</taxon>
        <taxon>Alphainfluenzavirus influenzae</taxon>
        <taxon>Influenza A virus</taxon>
    </lineage>
</organism>
<reference key="1">
    <citation type="submission" date="2005-12" db="EMBL/GenBank/DDBJ databases">
        <title>The NIAID influenza genome sequencing project.</title>
        <authorList>
            <person name="Ghedin E."/>
            <person name="Spiro D."/>
            <person name="Miller N."/>
            <person name="Zaborsky J."/>
            <person name="Feldblyum T."/>
            <person name="Subbu V."/>
            <person name="Shumway M."/>
            <person name="Sparenborg J."/>
            <person name="Groveman L."/>
            <person name="Halpin R."/>
            <person name="Sitz J."/>
            <person name="Koo H."/>
            <person name="Salzberg S.L."/>
            <person name="Webster R.G."/>
            <person name="Hoffmann E."/>
            <person name="Krauss S."/>
            <person name="Naeve C."/>
            <person name="Bao Y."/>
            <person name="Bolotov P."/>
            <person name="Dernovoy D."/>
            <person name="Kiryutin B."/>
            <person name="Lipman D.J."/>
            <person name="Tatusova T."/>
        </authorList>
    </citation>
    <scope>NUCLEOTIDE SEQUENCE [GENOMIC RNA]</scope>
</reference>
<name>NS1_I78A8</name>
<comment type="function">
    <text evidence="1">Inhibits post-transcriptional processing of cellular pre-mRNA, by binding and inhibiting two cellular proteins that are required for the 3'-end processing of cellular pre-mRNAs: the 30 kDa cleavage and polyadenylation specificity factor/CPSF4 and the poly(A)-binding protein 2/PABPN1. In turn, unprocessed 3' end pre-mRNAs accumulate in the host nucleus and are no longer exported to the cytoplasm. Cellular protein synthesis is thereby shut off very early after virus infection. Viral protein synthesis is not affected by the inhibition of the cellular 3' end processing machinery because the poly(A) tails of viral mRNAs are produced by the viral polymerase through a stuttering mechanism. Prevents the establishment of the cellular antiviral state by inhibiting TRIM25-mediated RIGI ubiquitination, which normally triggers the antiviral transduction signal that leads to the activation of type I IFN genes by transcription factors IRF3 and IRF7. Also binds poly(A) and U6 snRNA. Inhibits the integrated stress response (ISR) in the infected cell by blocking dsRNA binding by EIF2AK2/PKR and further phosphorylation of EIF2S1/EIF-2ALPHA. Stress granule formation is thus inhibited, which allows protein synthesis and viral replication.</text>
</comment>
<comment type="subunit">
    <text evidence="1">Homodimer. Interacts with host TRIM25 (via coiled coil); this interaction specifically inhibits TRIM25 multimerization and TRIM25-mediated RIGI CARD ubiquitination. Interacts with human EIF2AK2/PKR, CPSF4, IVNS1ABP and PABPN1.</text>
</comment>
<comment type="subcellular location">
    <subcellularLocation>
        <location evidence="1">Host nucleus</location>
    </subcellularLocation>
    <subcellularLocation>
        <location evidence="1">Host cytoplasm</location>
    </subcellularLocation>
    <text evidence="1">In uninfected, transfected cells, NS1 is localized in the nucleus. Only in virus infected cells, the nuclear export signal is unveiled, presumably by a viral protein, and a fraction of NS1 is exported in the cytoplasm.</text>
</comment>
<comment type="alternative products">
    <event type="alternative splicing"/>
    <isoform>
        <id>Q2VNC7-1</id>
        <name>NS1</name>
        <sequence type="displayed"/>
    </isoform>
    <isoform>
        <id>Q2VNC8-1</id>
        <name>NEP</name>
        <name>NS2</name>
        <sequence type="external"/>
    </isoform>
</comment>
<comment type="domain">
    <text evidence="1">The dsRNA-binding region is required for suppression of RNA silencing.</text>
</comment>
<comment type="PTM">
    <text evidence="1">Upon interferon induction, ISGylated via host HERC5; this results in the impairment of NS1 interaction with RNA targets due to its inability to form homodimers and to interact with host EIF2AK2/PKR.</text>
</comment>
<comment type="similarity">
    <text evidence="1">Belongs to the influenza A viruses NS1 family.</text>
</comment>
<evidence type="ECO:0000255" key="1">
    <source>
        <dbReference type="HAMAP-Rule" id="MF_04066"/>
    </source>
</evidence>
<evidence type="ECO:0000256" key="2">
    <source>
        <dbReference type="SAM" id="MobiDB-lite"/>
    </source>
</evidence>
<protein>
    <recommendedName>
        <fullName evidence="1">Non-structural protein 1</fullName>
        <shortName evidence="1">NS1</shortName>
    </recommendedName>
    <alternativeName>
        <fullName evidence="1">NS1A</fullName>
    </alternativeName>
</protein>
<keyword id="KW-0025">Alternative splicing</keyword>
<keyword id="KW-1262">Eukaryotic host gene expression shutoff by virus</keyword>
<keyword id="KW-1035">Host cytoplasm</keyword>
<keyword id="KW-1190">Host gene expression shutoff by virus</keyword>
<keyword id="KW-1192">Host mRNA suppression by virus</keyword>
<keyword id="KW-1048">Host nucleus</keyword>
<keyword id="KW-0945">Host-virus interaction</keyword>
<keyword id="KW-1090">Inhibition of host innate immune response by virus</keyword>
<keyword id="KW-1114">Inhibition of host interferon signaling pathway by virus</keyword>
<keyword id="KW-1102">Inhibition of host PKR by virus</keyword>
<keyword id="KW-1103">Inhibition of host pre-mRNA processing by virus</keyword>
<keyword id="KW-1088">Inhibition of host RIG-I by virus</keyword>
<keyword id="KW-1113">Inhibition of host RLR pathway by virus</keyword>
<keyword id="KW-0922">Interferon antiviral system evasion</keyword>
<keyword id="KW-0694">RNA-binding</keyword>
<keyword id="KW-0832">Ubl conjugation</keyword>
<keyword id="KW-0899">Viral immunoevasion</keyword>
<dbReference type="EMBL" id="CY006711">
    <property type="protein sequence ID" value="ABB96346.1"/>
    <property type="molecule type" value="Genomic_RNA"/>
</dbReference>
<dbReference type="SMR" id="Q2VNC7"/>
<dbReference type="Proteomes" id="UP000008574">
    <property type="component" value="Genome"/>
</dbReference>
<dbReference type="GO" id="GO:0030430">
    <property type="term" value="C:host cell cytoplasm"/>
    <property type="evidence" value="ECO:0007669"/>
    <property type="project" value="UniProtKB-SubCell"/>
</dbReference>
<dbReference type="GO" id="GO:0042025">
    <property type="term" value="C:host cell nucleus"/>
    <property type="evidence" value="ECO:0007669"/>
    <property type="project" value="UniProtKB-SubCell"/>
</dbReference>
<dbReference type="GO" id="GO:0030291">
    <property type="term" value="F:protein serine/threonine kinase inhibitor activity"/>
    <property type="evidence" value="ECO:0007669"/>
    <property type="project" value="UniProtKB-KW"/>
</dbReference>
<dbReference type="GO" id="GO:0003723">
    <property type="term" value="F:RNA binding"/>
    <property type="evidence" value="ECO:0007669"/>
    <property type="project" value="UniProtKB-KW"/>
</dbReference>
<dbReference type="GO" id="GO:0039540">
    <property type="term" value="P:symbiont-mediated suppression of host cytoplasmic pattern recognition receptor signaling pathway via inhibition of RIG-I activity"/>
    <property type="evidence" value="ECO:0007669"/>
    <property type="project" value="UniProtKB-KW"/>
</dbReference>
<dbReference type="GO" id="GO:0039657">
    <property type="term" value="P:symbiont-mediated suppression of host gene expression"/>
    <property type="evidence" value="ECO:0007669"/>
    <property type="project" value="UniProtKB-KW"/>
</dbReference>
<dbReference type="GO" id="GO:0039524">
    <property type="term" value="P:symbiont-mediated suppression of host mRNA processing"/>
    <property type="evidence" value="ECO:0007669"/>
    <property type="project" value="UniProtKB-KW"/>
</dbReference>
<dbReference type="GO" id="GO:0039580">
    <property type="term" value="P:symbiont-mediated suppression of host PKR/eIFalpha signaling"/>
    <property type="evidence" value="ECO:0007669"/>
    <property type="project" value="UniProtKB-KW"/>
</dbReference>
<dbReference type="GO" id="GO:0039502">
    <property type="term" value="P:symbiont-mediated suppression of host type I interferon-mediated signaling pathway"/>
    <property type="evidence" value="ECO:0007669"/>
    <property type="project" value="UniProtKB-KW"/>
</dbReference>
<dbReference type="FunFam" id="1.10.287.10:FF:000001">
    <property type="entry name" value="Non-structural protein 1"/>
    <property type="match status" value="1"/>
</dbReference>
<dbReference type="FunFam" id="3.30.420.330:FF:000001">
    <property type="entry name" value="Non-structural protein 1"/>
    <property type="match status" value="1"/>
</dbReference>
<dbReference type="Gene3D" id="3.30.420.330">
    <property type="entry name" value="Influenza virus non-structural protein, effector domain"/>
    <property type="match status" value="1"/>
</dbReference>
<dbReference type="Gene3D" id="1.10.287.10">
    <property type="entry name" value="S15/NS1, RNA-binding"/>
    <property type="match status" value="1"/>
</dbReference>
<dbReference type="HAMAP" id="MF_04066">
    <property type="entry name" value="INFV_NS1"/>
    <property type="match status" value="1"/>
</dbReference>
<dbReference type="InterPro" id="IPR004208">
    <property type="entry name" value="NS1"/>
</dbReference>
<dbReference type="InterPro" id="IPR000256">
    <property type="entry name" value="NS1A"/>
</dbReference>
<dbReference type="InterPro" id="IPR038064">
    <property type="entry name" value="NS1A_effect_dom-like_sf"/>
</dbReference>
<dbReference type="InterPro" id="IPR009068">
    <property type="entry name" value="uS15_NS1_RNA-bd_sf"/>
</dbReference>
<dbReference type="Pfam" id="PF00600">
    <property type="entry name" value="Flu_NS1"/>
    <property type="match status" value="1"/>
</dbReference>
<dbReference type="SUPFAM" id="SSF143021">
    <property type="entry name" value="Ns1 effector domain-like"/>
    <property type="match status" value="1"/>
</dbReference>
<dbReference type="SUPFAM" id="SSF47060">
    <property type="entry name" value="S15/NS1 RNA-binding domain"/>
    <property type="match status" value="1"/>
</dbReference>
<feature type="chain" id="PRO_0000324262" description="Non-structural protein 1">
    <location>
        <begin position="1"/>
        <end position="237"/>
    </location>
</feature>
<feature type="region of interest" description="RNA-binding and homodimerization" evidence="1">
    <location>
        <begin position="1"/>
        <end position="73"/>
    </location>
</feature>
<feature type="region of interest" description="CPSF4-binding" evidence="1">
    <location>
        <begin position="180"/>
        <end position="215"/>
    </location>
</feature>
<feature type="region of interest" description="Disordered" evidence="2">
    <location>
        <begin position="205"/>
        <end position="237"/>
    </location>
</feature>
<feature type="region of interest" description="PABPN1-binding" evidence="1">
    <location>
        <begin position="223"/>
        <end position="230"/>
    </location>
</feature>
<feature type="short sequence motif" description="Nuclear localization signal" evidence="1">
    <location>
        <begin position="34"/>
        <end position="38"/>
    </location>
</feature>
<feature type="short sequence motif" description="Nuclear export signal" evidence="1">
    <location>
        <begin position="137"/>
        <end position="146"/>
    </location>
</feature>
<feature type="compositionally biased region" description="Basic residues" evidence="2">
    <location>
        <begin position="217"/>
        <end position="237"/>
    </location>
</feature>
<sequence>MDSNTVSSFQVDCFLWHVRKQVVDQELGDAPFLDRLRRDQRSLRGRGSTLGLDIEAATHVGKQIVEKILKEESDEALKMSMASTPASRYITDMTIEELSRDWFMLMPKQKVEGPLCIRMDQAIMEKNIMLKANFSVIFDRLETLILLRAFTEEGAIVGEISPLLSFPGHTIEDVKNAIGVLIGGLEWNDNTVRVSKTLQRFAWGSSNENGGPPLTPKQKRKMARTARSKVRRDKMAD</sequence>
<proteinExistence type="inferred from homology"/>
<gene>
    <name evidence="1" type="primary">NS</name>
</gene>